<organism>
    <name type="scientific">Mycobacterium bovis (strain BCG / Tokyo 172 / ATCC 35737 / TMC 1019)</name>
    <dbReference type="NCBI Taxonomy" id="561275"/>
    <lineage>
        <taxon>Bacteria</taxon>
        <taxon>Bacillati</taxon>
        <taxon>Actinomycetota</taxon>
        <taxon>Actinomycetes</taxon>
        <taxon>Mycobacteriales</taxon>
        <taxon>Mycobacteriaceae</taxon>
        <taxon>Mycobacterium</taxon>
        <taxon>Mycobacterium tuberculosis complex</taxon>
    </lineage>
</organism>
<feature type="chain" id="PRO_1000148980" description="Phosphoribosyl isomerase A">
    <location>
        <begin position="1"/>
        <end position="245"/>
    </location>
</feature>
<feature type="active site" description="Proton acceptor" evidence="1">
    <location>
        <position position="11"/>
    </location>
</feature>
<feature type="active site" description="Proton donor" evidence="1">
    <location>
        <position position="130"/>
    </location>
</feature>
<evidence type="ECO:0000255" key="1">
    <source>
        <dbReference type="HAMAP-Rule" id="MF_01014"/>
    </source>
</evidence>
<comment type="function">
    <text evidence="1">Involved in both the histidine and tryptophan biosynthetic pathways.</text>
</comment>
<comment type="catalytic activity">
    <reaction evidence="1">
        <text>1-(5-phospho-beta-D-ribosyl)-5-[(5-phospho-beta-D-ribosylamino)methylideneamino]imidazole-4-carboxamide = 5-[(5-phospho-1-deoxy-D-ribulos-1-ylimino)methylamino]-1-(5-phospho-beta-D-ribosyl)imidazole-4-carboxamide</text>
        <dbReference type="Rhea" id="RHEA:15469"/>
        <dbReference type="ChEBI" id="CHEBI:58435"/>
        <dbReference type="ChEBI" id="CHEBI:58525"/>
        <dbReference type="EC" id="5.3.1.16"/>
    </reaction>
</comment>
<comment type="catalytic activity">
    <reaction evidence="1">
        <text>N-(5-phospho-beta-D-ribosyl)anthranilate = 1-(2-carboxyphenylamino)-1-deoxy-D-ribulose 5-phosphate</text>
        <dbReference type="Rhea" id="RHEA:21540"/>
        <dbReference type="ChEBI" id="CHEBI:18277"/>
        <dbReference type="ChEBI" id="CHEBI:58613"/>
        <dbReference type="EC" id="5.3.1.24"/>
    </reaction>
</comment>
<comment type="pathway">
    <text evidence="1">Amino-acid biosynthesis; L-histidine biosynthesis; L-histidine from 5-phospho-alpha-D-ribose 1-diphosphate: step 4/9.</text>
</comment>
<comment type="pathway">
    <text evidence="1">Amino-acid biosynthesis; L-tryptophan biosynthesis; L-tryptophan from chorismate: step 3/5.</text>
</comment>
<comment type="subcellular location">
    <subcellularLocation>
        <location evidence="1">Cytoplasm</location>
    </subcellularLocation>
</comment>
<comment type="similarity">
    <text evidence="1">Belongs to the HisA/HisF family.</text>
</comment>
<name>HIS4_MYCBT</name>
<accession>C1ANM5</accession>
<sequence>MMPLILLPAVDVVEGRAVRLVQGKAGSQTEYGSAVDAALGWQRDGAEWIHLVDLDAAFGRGSNHELLAEVVGKLDVQVELSGGIRDDESLAAALATGCARVNVGTAALENPQWCARVIGEHGDQVAVGLDVQIIDGEHRLRGRGWETDGGDLWDVLERLDSEGCSRFVVTDITKDGTLGGPNLDLLAGVADRTDAPVIASGGVSSLDDLRAIATLTHRGVEGAIVGKALYARRFTLPQALAAVRD</sequence>
<keyword id="KW-0028">Amino-acid biosynthesis</keyword>
<keyword id="KW-0057">Aromatic amino acid biosynthesis</keyword>
<keyword id="KW-0963">Cytoplasm</keyword>
<keyword id="KW-0368">Histidine biosynthesis</keyword>
<keyword id="KW-0413">Isomerase</keyword>
<keyword id="KW-0822">Tryptophan biosynthesis</keyword>
<gene>
    <name evidence="1" type="primary">priA</name>
    <name evidence="1" type="synonym">hisA</name>
    <name type="ordered locus">JTY_1616</name>
</gene>
<protein>
    <recommendedName>
        <fullName evidence="1">Phosphoribosyl isomerase A</fullName>
    </recommendedName>
    <alternativeName>
        <fullName evidence="1">1-(5-phosphoribosyl)-5-[(5-phosphoribosylamino)methylideneamino] imidazole-4-carboxamide isomerase</fullName>
        <ecNumber evidence="1">5.3.1.16</ecNumber>
    </alternativeName>
    <alternativeName>
        <fullName evidence="1">N-(5'-phosphoribosyl)anthranilate isomerase</fullName>
        <shortName evidence="1">PRAI</shortName>
        <ecNumber evidence="1">5.3.1.24</ecNumber>
    </alternativeName>
    <alternativeName>
        <fullName evidence="1">Phosphoribosylformimino-5-aminoimidazole carboxamide ribotide isomerase</fullName>
    </alternativeName>
</protein>
<dbReference type="EC" id="5.3.1.16" evidence="1"/>
<dbReference type="EC" id="5.3.1.24" evidence="1"/>
<dbReference type="EMBL" id="AP010918">
    <property type="protein sequence ID" value="BAH25904.1"/>
    <property type="molecule type" value="Genomic_DNA"/>
</dbReference>
<dbReference type="RefSeq" id="WP_003900374.1">
    <property type="nucleotide sequence ID" value="NZ_CP014566.1"/>
</dbReference>
<dbReference type="SMR" id="C1ANM5"/>
<dbReference type="KEGG" id="mbt:JTY_1616"/>
<dbReference type="HOGENOM" id="CLU_048577_1_1_11"/>
<dbReference type="UniPathway" id="UPA00031">
    <property type="reaction ID" value="UER00009"/>
</dbReference>
<dbReference type="UniPathway" id="UPA00035">
    <property type="reaction ID" value="UER00042"/>
</dbReference>
<dbReference type="GO" id="GO:0005737">
    <property type="term" value="C:cytoplasm"/>
    <property type="evidence" value="ECO:0007669"/>
    <property type="project" value="UniProtKB-SubCell"/>
</dbReference>
<dbReference type="GO" id="GO:0003949">
    <property type="term" value="F:1-(5-phosphoribosyl)-5-[(5-phosphoribosylamino)methylideneamino]imidazole-4-carboxamide isomerase activity"/>
    <property type="evidence" value="ECO:0007669"/>
    <property type="project" value="UniProtKB-UniRule"/>
</dbReference>
<dbReference type="GO" id="GO:0004640">
    <property type="term" value="F:phosphoribosylanthranilate isomerase activity"/>
    <property type="evidence" value="ECO:0007669"/>
    <property type="project" value="UniProtKB-UniRule"/>
</dbReference>
<dbReference type="GO" id="GO:0000105">
    <property type="term" value="P:L-histidine biosynthetic process"/>
    <property type="evidence" value="ECO:0007669"/>
    <property type="project" value="UniProtKB-UniRule"/>
</dbReference>
<dbReference type="GO" id="GO:0000162">
    <property type="term" value="P:L-tryptophan biosynthetic process"/>
    <property type="evidence" value="ECO:0007669"/>
    <property type="project" value="UniProtKB-UniRule"/>
</dbReference>
<dbReference type="CDD" id="cd04732">
    <property type="entry name" value="HisA"/>
    <property type="match status" value="1"/>
</dbReference>
<dbReference type="FunFam" id="3.20.20.70:FF:000009">
    <property type="entry name" value="1-(5-phosphoribosyl)-5-[(5-phosphoribosylamino)methylideneamino] imidazole-4-carboxamide isomerase"/>
    <property type="match status" value="1"/>
</dbReference>
<dbReference type="Gene3D" id="3.20.20.70">
    <property type="entry name" value="Aldolase class I"/>
    <property type="match status" value="1"/>
</dbReference>
<dbReference type="HAMAP" id="MF_01014">
    <property type="entry name" value="HisA"/>
    <property type="match status" value="1"/>
</dbReference>
<dbReference type="InterPro" id="IPR013785">
    <property type="entry name" value="Aldolase_TIM"/>
</dbReference>
<dbReference type="InterPro" id="IPR006062">
    <property type="entry name" value="His_biosynth"/>
</dbReference>
<dbReference type="InterPro" id="IPR010188">
    <property type="entry name" value="HisA/PriA_Actinobacteria"/>
</dbReference>
<dbReference type="InterPro" id="IPR044524">
    <property type="entry name" value="Isoase_HisA-like"/>
</dbReference>
<dbReference type="InterPro" id="IPR023016">
    <property type="entry name" value="Isoase_HisA-like_bact"/>
</dbReference>
<dbReference type="InterPro" id="IPR011060">
    <property type="entry name" value="RibuloseP-bd_barrel"/>
</dbReference>
<dbReference type="NCBIfam" id="TIGR01919">
    <property type="entry name" value="hisA-trpF"/>
    <property type="match status" value="1"/>
</dbReference>
<dbReference type="PANTHER" id="PTHR43090">
    <property type="entry name" value="1-(5-PHOSPHORIBOSYL)-5-[(5-PHOSPHORIBOSYLAMINO)METHYLIDENEAMINO] IMIDAZOLE-4-CARBOXAMIDE ISOMERASE"/>
    <property type="match status" value="1"/>
</dbReference>
<dbReference type="PANTHER" id="PTHR43090:SF2">
    <property type="entry name" value="1-(5-PHOSPHORIBOSYL)-5-[(5-PHOSPHORIBOSYLAMINO)METHYLIDENEAMINO] IMIDAZOLE-4-CARBOXAMIDE ISOMERASE"/>
    <property type="match status" value="1"/>
</dbReference>
<dbReference type="Pfam" id="PF00977">
    <property type="entry name" value="His_biosynth"/>
    <property type="match status" value="1"/>
</dbReference>
<dbReference type="SUPFAM" id="SSF51366">
    <property type="entry name" value="Ribulose-phoshate binding barrel"/>
    <property type="match status" value="1"/>
</dbReference>
<proteinExistence type="inferred from homology"/>
<reference key="1">
    <citation type="journal article" date="2009" name="Vaccine">
        <title>Whole genome sequence analysis of Mycobacterium bovis bacillus Calmette-Guerin (BCG) Tokyo 172: a comparative study of BCG vaccine substrains.</title>
        <authorList>
            <person name="Seki M."/>
            <person name="Honda I."/>
            <person name="Fujita I."/>
            <person name="Yano I."/>
            <person name="Yamamoto S."/>
            <person name="Koyama A."/>
        </authorList>
    </citation>
    <scope>NUCLEOTIDE SEQUENCE [LARGE SCALE GENOMIC DNA]</scope>
    <source>
        <strain>BCG / Tokyo 172 / ATCC 35737 / TMC 1019</strain>
    </source>
</reference>